<dbReference type="EC" id="2.6.1.11" evidence="1"/>
<dbReference type="EMBL" id="AE001437">
    <property type="protein sequence ID" value="AAK80343.1"/>
    <property type="molecule type" value="Genomic_DNA"/>
</dbReference>
<dbReference type="PIR" id="D97194">
    <property type="entry name" value="D97194"/>
</dbReference>
<dbReference type="RefSeq" id="NP_349003.1">
    <property type="nucleotide sequence ID" value="NC_003030.1"/>
</dbReference>
<dbReference type="RefSeq" id="WP_010965684.1">
    <property type="nucleotide sequence ID" value="NC_003030.1"/>
</dbReference>
<dbReference type="SMR" id="Q97GH9"/>
<dbReference type="STRING" id="272562.CA_C2388"/>
<dbReference type="KEGG" id="cac:CA_C2388"/>
<dbReference type="PATRIC" id="fig|272562.8.peg.2585"/>
<dbReference type="eggNOG" id="COG4992">
    <property type="taxonomic scope" value="Bacteria"/>
</dbReference>
<dbReference type="HOGENOM" id="CLU_016922_10_1_9"/>
<dbReference type="OrthoDB" id="9801052at2"/>
<dbReference type="UniPathway" id="UPA00068">
    <property type="reaction ID" value="UER00109"/>
</dbReference>
<dbReference type="Proteomes" id="UP000000814">
    <property type="component" value="Chromosome"/>
</dbReference>
<dbReference type="GO" id="GO:0005737">
    <property type="term" value="C:cytoplasm"/>
    <property type="evidence" value="ECO:0007669"/>
    <property type="project" value="UniProtKB-SubCell"/>
</dbReference>
<dbReference type="GO" id="GO:0042802">
    <property type="term" value="F:identical protein binding"/>
    <property type="evidence" value="ECO:0007669"/>
    <property type="project" value="TreeGrafter"/>
</dbReference>
<dbReference type="GO" id="GO:0003992">
    <property type="term" value="F:N2-acetyl-L-ornithine:2-oxoglutarate 5-aminotransferase activity"/>
    <property type="evidence" value="ECO:0007669"/>
    <property type="project" value="UniProtKB-UniRule"/>
</dbReference>
<dbReference type="GO" id="GO:0030170">
    <property type="term" value="F:pyridoxal phosphate binding"/>
    <property type="evidence" value="ECO:0007669"/>
    <property type="project" value="InterPro"/>
</dbReference>
<dbReference type="GO" id="GO:0006526">
    <property type="term" value="P:L-arginine biosynthetic process"/>
    <property type="evidence" value="ECO:0007669"/>
    <property type="project" value="UniProtKB-UniRule"/>
</dbReference>
<dbReference type="CDD" id="cd00610">
    <property type="entry name" value="OAT_like"/>
    <property type="match status" value="1"/>
</dbReference>
<dbReference type="FunFam" id="3.40.640.10:FF:000004">
    <property type="entry name" value="Acetylornithine aminotransferase"/>
    <property type="match status" value="1"/>
</dbReference>
<dbReference type="Gene3D" id="3.90.1150.10">
    <property type="entry name" value="Aspartate Aminotransferase, domain 1"/>
    <property type="match status" value="1"/>
</dbReference>
<dbReference type="Gene3D" id="3.40.640.10">
    <property type="entry name" value="Type I PLP-dependent aspartate aminotransferase-like (Major domain)"/>
    <property type="match status" value="1"/>
</dbReference>
<dbReference type="HAMAP" id="MF_01107">
    <property type="entry name" value="ArgD_aminotrans_3"/>
    <property type="match status" value="1"/>
</dbReference>
<dbReference type="InterPro" id="IPR004636">
    <property type="entry name" value="AcOrn/SuccOrn_fam"/>
</dbReference>
<dbReference type="InterPro" id="IPR005814">
    <property type="entry name" value="Aminotrans_3"/>
</dbReference>
<dbReference type="InterPro" id="IPR049704">
    <property type="entry name" value="Aminotrans_3_PPA_site"/>
</dbReference>
<dbReference type="InterPro" id="IPR050103">
    <property type="entry name" value="Class-III_PLP-dep_AT"/>
</dbReference>
<dbReference type="InterPro" id="IPR015424">
    <property type="entry name" value="PyrdxlP-dep_Trfase"/>
</dbReference>
<dbReference type="InterPro" id="IPR015421">
    <property type="entry name" value="PyrdxlP-dep_Trfase_major"/>
</dbReference>
<dbReference type="InterPro" id="IPR015422">
    <property type="entry name" value="PyrdxlP-dep_Trfase_small"/>
</dbReference>
<dbReference type="NCBIfam" id="TIGR00707">
    <property type="entry name" value="argD"/>
    <property type="match status" value="1"/>
</dbReference>
<dbReference type="NCBIfam" id="NF002325">
    <property type="entry name" value="PRK01278.1"/>
    <property type="match status" value="1"/>
</dbReference>
<dbReference type="PANTHER" id="PTHR11986:SF79">
    <property type="entry name" value="ACETYLORNITHINE AMINOTRANSFERASE, MITOCHONDRIAL"/>
    <property type="match status" value="1"/>
</dbReference>
<dbReference type="PANTHER" id="PTHR11986">
    <property type="entry name" value="AMINOTRANSFERASE CLASS III"/>
    <property type="match status" value="1"/>
</dbReference>
<dbReference type="Pfam" id="PF00202">
    <property type="entry name" value="Aminotran_3"/>
    <property type="match status" value="1"/>
</dbReference>
<dbReference type="PIRSF" id="PIRSF000521">
    <property type="entry name" value="Transaminase_4ab_Lys_Orn"/>
    <property type="match status" value="1"/>
</dbReference>
<dbReference type="SUPFAM" id="SSF53383">
    <property type="entry name" value="PLP-dependent transferases"/>
    <property type="match status" value="1"/>
</dbReference>
<dbReference type="PROSITE" id="PS00600">
    <property type="entry name" value="AA_TRANSFER_CLASS_3"/>
    <property type="match status" value="1"/>
</dbReference>
<keyword id="KW-0028">Amino-acid biosynthesis</keyword>
<keyword id="KW-0032">Aminotransferase</keyword>
<keyword id="KW-0055">Arginine biosynthesis</keyword>
<keyword id="KW-0963">Cytoplasm</keyword>
<keyword id="KW-0663">Pyridoxal phosphate</keyword>
<keyword id="KW-1185">Reference proteome</keyword>
<keyword id="KW-0808">Transferase</keyword>
<feature type="chain" id="PRO_0000112739" description="Acetylornithine aminotransferase">
    <location>
        <begin position="1"/>
        <end position="387"/>
    </location>
</feature>
<feature type="binding site" evidence="1">
    <location>
        <begin position="97"/>
        <end position="98"/>
    </location>
    <ligand>
        <name>pyridoxal 5'-phosphate</name>
        <dbReference type="ChEBI" id="CHEBI:597326"/>
    </ligand>
</feature>
<feature type="binding site" evidence="1">
    <location>
        <position position="130"/>
    </location>
    <ligand>
        <name>pyridoxal 5'-phosphate</name>
        <dbReference type="ChEBI" id="CHEBI:597326"/>
    </ligand>
</feature>
<feature type="binding site" evidence="1">
    <location>
        <position position="133"/>
    </location>
    <ligand>
        <name>N(2)-acetyl-L-ornithine</name>
        <dbReference type="ChEBI" id="CHEBI:57805"/>
    </ligand>
</feature>
<feature type="binding site" evidence="1">
    <location>
        <begin position="215"/>
        <end position="218"/>
    </location>
    <ligand>
        <name>pyridoxal 5'-phosphate</name>
        <dbReference type="ChEBI" id="CHEBI:597326"/>
    </ligand>
</feature>
<feature type="binding site" evidence="1">
    <location>
        <position position="273"/>
    </location>
    <ligand>
        <name>pyridoxal 5'-phosphate</name>
        <dbReference type="ChEBI" id="CHEBI:597326"/>
    </ligand>
</feature>
<feature type="modified residue" description="N6-(pyridoxal phosphate)lysine" evidence="1">
    <location>
        <position position="244"/>
    </location>
</feature>
<name>ARGD_CLOAB</name>
<organism>
    <name type="scientific">Clostridium acetobutylicum (strain ATCC 824 / DSM 792 / JCM 1419 / IAM 19013 / LMG 5710 / NBRC 13948 / NRRL B-527 / VKM B-1787 / 2291 / W)</name>
    <dbReference type="NCBI Taxonomy" id="272562"/>
    <lineage>
        <taxon>Bacteria</taxon>
        <taxon>Bacillati</taxon>
        <taxon>Bacillota</taxon>
        <taxon>Clostridia</taxon>
        <taxon>Eubacteriales</taxon>
        <taxon>Clostridiaceae</taxon>
        <taxon>Clostridium</taxon>
    </lineage>
</organism>
<comment type="catalytic activity">
    <reaction evidence="1">
        <text>N(2)-acetyl-L-ornithine + 2-oxoglutarate = N-acetyl-L-glutamate 5-semialdehyde + L-glutamate</text>
        <dbReference type="Rhea" id="RHEA:18049"/>
        <dbReference type="ChEBI" id="CHEBI:16810"/>
        <dbReference type="ChEBI" id="CHEBI:29123"/>
        <dbReference type="ChEBI" id="CHEBI:29985"/>
        <dbReference type="ChEBI" id="CHEBI:57805"/>
        <dbReference type="EC" id="2.6.1.11"/>
    </reaction>
</comment>
<comment type="cofactor">
    <cofactor evidence="1">
        <name>pyridoxal 5'-phosphate</name>
        <dbReference type="ChEBI" id="CHEBI:597326"/>
    </cofactor>
    <text evidence="1">Binds 1 pyridoxal phosphate per subunit.</text>
</comment>
<comment type="pathway">
    <text evidence="1">Amino-acid biosynthesis; L-arginine biosynthesis; N(2)-acetyl-L-ornithine from L-glutamate: step 4/4.</text>
</comment>
<comment type="subunit">
    <text evidence="1">Homodimer.</text>
</comment>
<comment type="subcellular location">
    <subcellularLocation>
        <location evidence="1">Cytoplasm</location>
    </subcellularLocation>
</comment>
<comment type="miscellaneous">
    <text evidence="1">May also have succinyldiaminopimelate aminotransferase activity, thus carrying out the corresponding step in lysine biosynthesis.</text>
</comment>
<comment type="similarity">
    <text evidence="1">Belongs to the class-III pyridoxal-phosphate-dependent aminotransferase family. ArgD subfamily.</text>
</comment>
<proteinExistence type="inferred from homology"/>
<reference key="1">
    <citation type="journal article" date="2001" name="J. Bacteriol.">
        <title>Genome sequence and comparative analysis of the solvent-producing bacterium Clostridium acetobutylicum.</title>
        <authorList>
            <person name="Noelling J."/>
            <person name="Breton G."/>
            <person name="Omelchenko M.V."/>
            <person name="Makarova K.S."/>
            <person name="Zeng Q."/>
            <person name="Gibson R."/>
            <person name="Lee H.M."/>
            <person name="Dubois J."/>
            <person name="Qiu D."/>
            <person name="Hitti J."/>
            <person name="Wolf Y.I."/>
            <person name="Tatusov R.L."/>
            <person name="Sabathe F."/>
            <person name="Doucette-Stamm L.A."/>
            <person name="Soucaille P."/>
            <person name="Daly M.J."/>
            <person name="Bennett G.N."/>
            <person name="Koonin E.V."/>
            <person name="Smith D.R."/>
        </authorList>
    </citation>
    <scope>NUCLEOTIDE SEQUENCE [LARGE SCALE GENOMIC DNA]</scope>
    <source>
        <strain>ATCC 824 / DSM 792 / JCM 1419 / IAM 19013 / LMG 5710 / NBRC 13948 / NRRL B-527 / VKM B-1787 / 2291 / W</strain>
    </source>
</reference>
<evidence type="ECO:0000255" key="1">
    <source>
        <dbReference type="HAMAP-Rule" id="MF_01107"/>
    </source>
</evidence>
<accession>Q97GH9</accession>
<protein>
    <recommendedName>
        <fullName evidence="1">Acetylornithine aminotransferase</fullName>
        <shortName evidence="1">ACOAT</shortName>
        <ecNumber evidence="1">2.6.1.11</ecNumber>
    </recommendedName>
</protein>
<sequence>MSKSYLMNTYGRFNVTFDKGEGTKLYDKDGNEYIDFVSGVAVNCLGHCNPSIVKAIEEQSSKLMHVSNYYWNENAMELTEILCKNSEFDKVFMCNSGTEAIEAGLKLARKYALLHGDENKKEIIYMDNSFHGRTMGALSVTGQPKYQESFKPLIGAVKSVKFNDLDDIKQKISSKTAAVIVEPIQGEGGIIPAKKEYLKLLRDLCDENNALLIFDEVQCGMGRVGSLFAYQKFEVVPDIVCIAKALGGGFPIGAMLAKESVASSFVPGDHGNTYGGNPLACAVAIAVLKELVDKKVVEINVNEKSKYLFDKLMTLKEKYKVINDVRGMGLLIGVEVACDVKKIINKCFESKLLLITAGKNVVRFLPPLNVSFEEIDKALGIFEESIK</sequence>
<gene>
    <name evidence="1" type="primary">argD</name>
    <name type="ordered locus">CA_C2388</name>
</gene>